<dbReference type="EC" id="1.3.1.98" evidence="1"/>
<dbReference type="EMBL" id="CP000033">
    <property type="protein sequence ID" value="AAV42582.1"/>
    <property type="molecule type" value="Genomic_DNA"/>
</dbReference>
<dbReference type="RefSeq" id="WP_003546624.1">
    <property type="nucleotide sequence ID" value="NC_006814.3"/>
</dbReference>
<dbReference type="RefSeq" id="YP_193613.1">
    <property type="nucleotide sequence ID" value="NC_006814.3"/>
</dbReference>
<dbReference type="SMR" id="Q5FL42"/>
<dbReference type="STRING" id="272621.LBA0708"/>
<dbReference type="GeneID" id="93290165"/>
<dbReference type="KEGG" id="lac:LBA0708"/>
<dbReference type="PATRIC" id="fig|272621.13.peg.677"/>
<dbReference type="eggNOG" id="COG0812">
    <property type="taxonomic scope" value="Bacteria"/>
</dbReference>
<dbReference type="HOGENOM" id="CLU_035304_1_1_9"/>
<dbReference type="OrthoDB" id="9804753at2"/>
<dbReference type="BioCyc" id="LACI272621:G1G49-729-MONOMER"/>
<dbReference type="UniPathway" id="UPA00219"/>
<dbReference type="Proteomes" id="UP000006381">
    <property type="component" value="Chromosome"/>
</dbReference>
<dbReference type="GO" id="GO:0005829">
    <property type="term" value="C:cytosol"/>
    <property type="evidence" value="ECO:0007669"/>
    <property type="project" value="TreeGrafter"/>
</dbReference>
<dbReference type="GO" id="GO:0071949">
    <property type="term" value="F:FAD binding"/>
    <property type="evidence" value="ECO:0007669"/>
    <property type="project" value="InterPro"/>
</dbReference>
<dbReference type="GO" id="GO:0008762">
    <property type="term" value="F:UDP-N-acetylmuramate dehydrogenase activity"/>
    <property type="evidence" value="ECO:0007669"/>
    <property type="project" value="UniProtKB-UniRule"/>
</dbReference>
<dbReference type="GO" id="GO:0051301">
    <property type="term" value="P:cell division"/>
    <property type="evidence" value="ECO:0007669"/>
    <property type="project" value="UniProtKB-KW"/>
</dbReference>
<dbReference type="GO" id="GO:0071555">
    <property type="term" value="P:cell wall organization"/>
    <property type="evidence" value="ECO:0007669"/>
    <property type="project" value="UniProtKB-KW"/>
</dbReference>
<dbReference type="GO" id="GO:0009252">
    <property type="term" value="P:peptidoglycan biosynthetic process"/>
    <property type="evidence" value="ECO:0007669"/>
    <property type="project" value="UniProtKB-UniRule"/>
</dbReference>
<dbReference type="GO" id="GO:0008360">
    <property type="term" value="P:regulation of cell shape"/>
    <property type="evidence" value="ECO:0007669"/>
    <property type="project" value="UniProtKB-KW"/>
</dbReference>
<dbReference type="Gene3D" id="3.30.465.10">
    <property type="match status" value="1"/>
</dbReference>
<dbReference type="Gene3D" id="3.90.78.10">
    <property type="entry name" value="UDP-N-acetylenolpyruvoylglucosamine reductase, C-terminal domain"/>
    <property type="match status" value="1"/>
</dbReference>
<dbReference type="Gene3D" id="3.30.43.10">
    <property type="entry name" value="Uridine Diphospho-n-acetylenolpyruvylglucosamine Reductase, domain 2"/>
    <property type="match status" value="1"/>
</dbReference>
<dbReference type="HAMAP" id="MF_00037">
    <property type="entry name" value="MurB"/>
    <property type="match status" value="1"/>
</dbReference>
<dbReference type="InterPro" id="IPR016166">
    <property type="entry name" value="FAD-bd_PCMH"/>
</dbReference>
<dbReference type="InterPro" id="IPR036318">
    <property type="entry name" value="FAD-bd_PCMH-like_sf"/>
</dbReference>
<dbReference type="InterPro" id="IPR016167">
    <property type="entry name" value="FAD-bd_PCMH_sub1"/>
</dbReference>
<dbReference type="InterPro" id="IPR016169">
    <property type="entry name" value="FAD-bd_PCMH_sub2"/>
</dbReference>
<dbReference type="InterPro" id="IPR003170">
    <property type="entry name" value="MurB"/>
</dbReference>
<dbReference type="InterPro" id="IPR011601">
    <property type="entry name" value="MurB_C"/>
</dbReference>
<dbReference type="InterPro" id="IPR036635">
    <property type="entry name" value="MurB_C_sf"/>
</dbReference>
<dbReference type="InterPro" id="IPR006094">
    <property type="entry name" value="Oxid_FAD_bind_N"/>
</dbReference>
<dbReference type="NCBIfam" id="TIGR00179">
    <property type="entry name" value="murB"/>
    <property type="match status" value="1"/>
</dbReference>
<dbReference type="NCBIfam" id="NF010480">
    <property type="entry name" value="PRK13905.1"/>
    <property type="match status" value="1"/>
</dbReference>
<dbReference type="PANTHER" id="PTHR21071">
    <property type="entry name" value="UDP-N-ACETYLENOLPYRUVOYLGLUCOSAMINE REDUCTASE"/>
    <property type="match status" value="1"/>
</dbReference>
<dbReference type="PANTHER" id="PTHR21071:SF4">
    <property type="entry name" value="UDP-N-ACETYLENOLPYRUVOYLGLUCOSAMINE REDUCTASE"/>
    <property type="match status" value="1"/>
</dbReference>
<dbReference type="Pfam" id="PF01565">
    <property type="entry name" value="FAD_binding_4"/>
    <property type="match status" value="1"/>
</dbReference>
<dbReference type="Pfam" id="PF02873">
    <property type="entry name" value="MurB_C"/>
    <property type="match status" value="1"/>
</dbReference>
<dbReference type="SUPFAM" id="SSF56176">
    <property type="entry name" value="FAD-binding/transporter-associated domain-like"/>
    <property type="match status" value="1"/>
</dbReference>
<dbReference type="SUPFAM" id="SSF56194">
    <property type="entry name" value="Uridine diphospho-N-Acetylenolpyruvylglucosamine reductase, MurB, C-terminal domain"/>
    <property type="match status" value="1"/>
</dbReference>
<dbReference type="PROSITE" id="PS51387">
    <property type="entry name" value="FAD_PCMH"/>
    <property type="match status" value="1"/>
</dbReference>
<accession>Q5FL42</accession>
<keyword id="KW-0131">Cell cycle</keyword>
<keyword id="KW-0132">Cell division</keyword>
<keyword id="KW-0133">Cell shape</keyword>
<keyword id="KW-0961">Cell wall biogenesis/degradation</keyword>
<keyword id="KW-0963">Cytoplasm</keyword>
<keyword id="KW-0274">FAD</keyword>
<keyword id="KW-0285">Flavoprotein</keyword>
<keyword id="KW-0521">NADP</keyword>
<keyword id="KW-0560">Oxidoreductase</keyword>
<keyword id="KW-0573">Peptidoglycan synthesis</keyword>
<keyword id="KW-1185">Reference proteome</keyword>
<sequence length="298" mass="32433">MELLNLKKQGIDIKEQIPLSRYTFTKTGGEAEYLAFPKTTDEVEKLVKVTQENKIPLTIIGNASNLIIRDGGIDGLVIILTELKNIEVNGNEVTADAGATIVDTAFTAANHGLSGMEFAAGIPGSIGGGVFMNAGAYGGEMQEAVKSVNVLTRAGEYKTYSNQEMDFSYRHSIIQENGDIVLSATFSLKPGNKLQILDHMDYLNALRRYKQPLEYPSCGSVFKRPKGHFVGPMIIKAGLQGKQIGGAQDSTKHAGFIVNKGGATATDYLDLIHLIQKVIKEKYDIDLHTEVRIIGKEN</sequence>
<evidence type="ECO:0000255" key="1">
    <source>
        <dbReference type="HAMAP-Rule" id="MF_00037"/>
    </source>
</evidence>
<feature type="chain" id="PRO_0000224688" description="UDP-N-acetylenolpyruvoylglucosamine reductase">
    <location>
        <begin position="1"/>
        <end position="298"/>
    </location>
</feature>
<feature type="domain" description="FAD-binding PCMH-type" evidence="1">
    <location>
        <begin position="26"/>
        <end position="191"/>
    </location>
</feature>
<feature type="active site" evidence="1">
    <location>
        <position position="170"/>
    </location>
</feature>
<feature type="active site" description="Proton donor" evidence="1">
    <location>
        <position position="220"/>
    </location>
</feature>
<feature type="active site" evidence="1">
    <location>
        <position position="290"/>
    </location>
</feature>
<gene>
    <name evidence="1" type="primary">murB</name>
    <name type="ordered locus">LBA0708</name>
</gene>
<reference key="1">
    <citation type="journal article" date="2005" name="Proc. Natl. Acad. Sci. U.S.A.">
        <title>Complete genome sequence of the probiotic lactic acid bacterium Lactobacillus acidophilus NCFM.</title>
        <authorList>
            <person name="Altermann E."/>
            <person name="Russell W.M."/>
            <person name="Azcarate-Peril M.A."/>
            <person name="Barrangou R."/>
            <person name="Buck B.L."/>
            <person name="McAuliffe O."/>
            <person name="Souther N."/>
            <person name="Dobson A."/>
            <person name="Duong T."/>
            <person name="Callanan M."/>
            <person name="Lick S."/>
            <person name="Hamrick A."/>
            <person name="Cano R."/>
            <person name="Klaenhammer T.R."/>
        </authorList>
    </citation>
    <scope>NUCLEOTIDE SEQUENCE [LARGE SCALE GENOMIC DNA]</scope>
    <source>
        <strain>ATCC 700396 / NCK56 / N2 / NCFM</strain>
    </source>
</reference>
<organism>
    <name type="scientific">Lactobacillus acidophilus (strain ATCC 700396 / NCK56 / N2 / NCFM)</name>
    <dbReference type="NCBI Taxonomy" id="272621"/>
    <lineage>
        <taxon>Bacteria</taxon>
        <taxon>Bacillati</taxon>
        <taxon>Bacillota</taxon>
        <taxon>Bacilli</taxon>
        <taxon>Lactobacillales</taxon>
        <taxon>Lactobacillaceae</taxon>
        <taxon>Lactobacillus</taxon>
    </lineage>
</organism>
<proteinExistence type="inferred from homology"/>
<comment type="function">
    <text evidence="1">Cell wall formation.</text>
</comment>
<comment type="catalytic activity">
    <reaction evidence="1">
        <text>UDP-N-acetyl-alpha-D-muramate + NADP(+) = UDP-N-acetyl-3-O-(1-carboxyvinyl)-alpha-D-glucosamine + NADPH + H(+)</text>
        <dbReference type="Rhea" id="RHEA:12248"/>
        <dbReference type="ChEBI" id="CHEBI:15378"/>
        <dbReference type="ChEBI" id="CHEBI:57783"/>
        <dbReference type="ChEBI" id="CHEBI:58349"/>
        <dbReference type="ChEBI" id="CHEBI:68483"/>
        <dbReference type="ChEBI" id="CHEBI:70757"/>
        <dbReference type="EC" id="1.3.1.98"/>
    </reaction>
</comment>
<comment type="cofactor">
    <cofactor evidence="1">
        <name>FAD</name>
        <dbReference type="ChEBI" id="CHEBI:57692"/>
    </cofactor>
</comment>
<comment type="pathway">
    <text evidence="1">Cell wall biogenesis; peptidoglycan biosynthesis.</text>
</comment>
<comment type="subcellular location">
    <subcellularLocation>
        <location evidence="1">Cytoplasm</location>
    </subcellularLocation>
</comment>
<comment type="similarity">
    <text evidence="1">Belongs to the MurB family.</text>
</comment>
<protein>
    <recommendedName>
        <fullName evidence="1">UDP-N-acetylenolpyruvoylglucosamine reductase</fullName>
        <ecNumber evidence="1">1.3.1.98</ecNumber>
    </recommendedName>
    <alternativeName>
        <fullName evidence="1">UDP-N-acetylmuramate dehydrogenase</fullName>
    </alternativeName>
</protein>
<name>MURB_LACAC</name>